<sequence>MLGPTPELDQTLQAYDYLLPETFIAQTPLVPRDRSRLLVVQQQAHQHKIFQDLVALLQPGDLLVFNDTRVIPARLLGRKLNSELAQPVEVFLLEPRQPNTWLALVRPGRRLKPGAQIEFGPPERPLLRAEILATDADTRGRIIQFESLVEEPFEDLLEQLGEVPLPPYIQESTAQPEQYQTVYAQHPGAVAAPTAGLHFTPELLARLQSEGINQAHLTLHVGIGTFRPVETDDILQHHMHSEWVDLPAATVDAIRTTKASGGRVIAVGTTVTRALEGACQNGPLVPWQGRTNLFIYPSYQWRVVDGLITNFHLPKSSLLMLVSALVGRERLLALYEDAIAQQYRFYSFGDAMLVLPEAVIAERSPDPVF</sequence>
<keyword id="KW-0963">Cytoplasm</keyword>
<keyword id="KW-0671">Queuosine biosynthesis</keyword>
<keyword id="KW-1185">Reference proteome</keyword>
<keyword id="KW-0949">S-adenosyl-L-methionine</keyword>
<keyword id="KW-0808">Transferase</keyword>
<evidence type="ECO:0000255" key="1">
    <source>
        <dbReference type="HAMAP-Rule" id="MF_00113"/>
    </source>
</evidence>
<reference key="1">
    <citation type="journal article" date="2008" name="Proc. Natl. Acad. Sci. U.S.A.">
        <title>Niche adaptation and genome expansion in the chlorophyll d-producing cyanobacterium Acaryochloris marina.</title>
        <authorList>
            <person name="Swingley W.D."/>
            <person name="Chen M."/>
            <person name="Cheung P.C."/>
            <person name="Conrad A.L."/>
            <person name="Dejesa L.C."/>
            <person name="Hao J."/>
            <person name="Honchak B.M."/>
            <person name="Karbach L.E."/>
            <person name="Kurdoglu A."/>
            <person name="Lahiri S."/>
            <person name="Mastrian S.D."/>
            <person name="Miyashita H."/>
            <person name="Page L."/>
            <person name="Ramakrishna P."/>
            <person name="Satoh S."/>
            <person name="Sattley W.M."/>
            <person name="Shimada Y."/>
            <person name="Taylor H.L."/>
            <person name="Tomo T."/>
            <person name="Tsuchiya T."/>
            <person name="Wang Z.T."/>
            <person name="Raymond J."/>
            <person name="Mimuro M."/>
            <person name="Blankenship R.E."/>
            <person name="Touchman J.W."/>
        </authorList>
    </citation>
    <scope>NUCLEOTIDE SEQUENCE [LARGE SCALE GENOMIC DNA]</scope>
    <source>
        <strain>MBIC 11017</strain>
    </source>
</reference>
<protein>
    <recommendedName>
        <fullName evidence="1">S-adenosylmethionine:tRNA ribosyltransferase-isomerase</fullName>
        <ecNumber evidence="1">2.4.99.17</ecNumber>
    </recommendedName>
    <alternativeName>
        <fullName evidence="1">Queuosine biosynthesis protein QueA</fullName>
    </alternativeName>
</protein>
<name>QUEA_ACAM1</name>
<gene>
    <name evidence="1" type="primary">queA</name>
    <name type="ordered locus">AM1_4637</name>
</gene>
<dbReference type="EC" id="2.4.99.17" evidence="1"/>
<dbReference type="EMBL" id="CP000828">
    <property type="protein sequence ID" value="ABW29611.1"/>
    <property type="molecule type" value="Genomic_DNA"/>
</dbReference>
<dbReference type="RefSeq" id="WP_012164914.1">
    <property type="nucleotide sequence ID" value="NC_009925.1"/>
</dbReference>
<dbReference type="SMR" id="B0C0B9"/>
<dbReference type="STRING" id="329726.AM1_4637"/>
<dbReference type="KEGG" id="amr:AM1_4637"/>
<dbReference type="eggNOG" id="COG0809">
    <property type="taxonomic scope" value="Bacteria"/>
</dbReference>
<dbReference type="HOGENOM" id="CLU_039110_1_0_3"/>
<dbReference type="OrthoDB" id="9805933at2"/>
<dbReference type="UniPathway" id="UPA00392"/>
<dbReference type="Proteomes" id="UP000000268">
    <property type="component" value="Chromosome"/>
</dbReference>
<dbReference type="GO" id="GO:0005737">
    <property type="term" value="C:cytoplasm"/>
    <property type="evidence" value="ECO:0007669"/>
    <property type="project" value="UniProtKB-SubCell"/>
</dbReference>
<dbReference type="GO" id="GO:0051075">
    <property type="term" value="F:S-adenosylmethionine:tRNA ribosyltransferase-isomerase activity"/>
    <property type="evidence" value="ECO:0007669"/>
    <property type="project" value="UniProtKB-EC"/>
</dbReference>
<dbReference type="GO" id="GO:0008616">
    <property type="term" value="P:queuosine biosynthetic process"/>
    <property type="evidence" value="ECO:0007669"/>
    <property type="project" value="UniProtKB-UniRule"/>
</dbReference>
<dbReference type="GO" id="GO:0002099">
    <property type="term" value="P:tRNA wobble guanine modification"/>
    <property type="evidence" value="ECO:0007669"/>
    <property type="project" value="TreeGrafter"/>
</dbReference>
<dbReference type="FunFam" id="2.40.10.240:FF:000002">
    <property type="entry name" value="S-adenosylmethionine:tRNA ribosyltransferase-isomerase"/>
    <property type="match status" value="1"/>
</dbReference>
<dbReference type="FunFam" id="3.40.1780.10:FF:000001">
    <property type="entry name" value="S-adenosylmethionine:tRNA ribosyltransferase-isomerase"/>
    <property type="match status" value="1"/>
</dbReference>
<dbReference type="Gene3D" id="2.40.10.240">
    <property type="entry name" value="QueA-like"/>
    <property type="match status" value="1"/>
</dbReference>
<dbReference type="Gene3D" id="3.40.1780.10">
    <property type="entry name" value="QueA-like"/>
    <property type="match status" value="1"/>
</dbReference>
<dbReference type="HAMAP" id="MF_00113">
    <property type="entry name" value="QueA"/>
    <property type="match status" value="1"/>
</dbReference>
<dbReference type="InterPro" id="IPR003699">
    <property type="entry name" value="QueA"/>
</dbReference>
<dbReference type="InterPro" id="IPR042118">
    <property type="entry name" value="QueA_dom1"/>
</dbReference>
<dbReference type="InterPro" id="IPR042119">
    <property type="entry name" value="QueA_dom2"/>
</dbReference>
<dbReference type="InterPro" id="IPR036100">
    <property type="entry name" value="QueA_sf"/>
</dbReference>
<dbReference type="NCBIfam" id="NF001140">
    <property type="entry name" value="PRK00147.1"/>
    <property type="match status" value="1"/>
</dbReference>
<dbReference type="NCBIfam" id="TIGR00113">
    <property type="entry name" value="queA"/>
    <property type="match status" value="1"/>
</dbReference>
<dbReference type="PANTHER" id="PTHR30307">
    <property type="entry name" value="S-ADENOSYLMETHIONINE:TRNA RIBOSYLTRANSFERASE-ISOMERASE"/>
    <property type="match status" value="1"/>
</dbReference>
<dbReference type="PANTHER" id="PTHR30307:SF0">
    <property type="entry name" value="S-ADENOSYLMETHIONINE:TRNA RIBOSYLTRANSFERASE-ISOMERASE"/>
    <property type="match status" value="1"/>
</dbReference>
<dbReference type="Pfam" id="PF02547">
    <property type="entry name" value="Queuosine_synth"/>
    <property type="match status" value="1"/>
</dbReference>
<dbReference type="SUPFAM" id="SSF111337">
    <property type="entry name" value="QueA-like"/>
    <property type="match status" value="1"/>
</dbReference>
<proteinExistence type="inferred from homology"/>
<comment type="function">
    <text evidence="1">Transfers and isomerizes the ribose moiety from AdoMet to the 7-aminomethyl group of 7-deazaguanine (preQ1-tRNA) to give epoxyqueuosine (oQ-tRNA).</text>
</comment>
<comment type="catalytic activity">
    <reaction evidence="1">
        <text>7-aminomethyl-7-carbaguanosine(34) in tRNA + S-adenosyl-L-methionine = epoxyqueuosine(34) in tRNA + adenine + L-methionine + 2 H(+)</text>
        <dbReference type="Rhea" id="RHEA:32155"/>
        <dbReference type="Rhea" id="RHEA-COMP:10342"/>
        <dbReference type="Rhea" id="RHEA-COMP:18582"/>
        <dbReference type="ChEBI" id="CHEBI:15378"/>
        <dbReference type="ChEBI" id="CHEBI:16708"/>
        <dbReference type="ChEBI" id="CHEBI:57844"/>
        <dbReference type="ChEBI" id="CHEBI:59789"/>
        <dbReference type="ChEBI" id="CHEBI:82833"/>
        <dbReference type="ChEBI" id="CHEBI:194443"/>
        <dbReference type="EC" id="2.4.99.17"/>
    </reaction>
</comment>
<comment type="pathway">
    <text evidence="1">tRNA modification; tRNA-queuosine biosynthesis.</text>
</comment>
<comment type="subunit">
    <text evidence="1">Monomer.</text>
</comment>
<comment type="subcellular location">
    <subcellularLocation>
        <location evidence="1">Cytoplasm</location>
    </subcellularLocation>
</comment>
<comment type="similarity">
    <text evidence="1">Belongs to the QueA family.</text>
</comment>
<feature type="chain" id="PRO_1000075991" description="S-adenosylmethionine:tRNA ribosyltransferase-isomerase">
    <location>
        <begin position="1"/>
        <end position="369"/>
    </location>
</feature>
<accession>B0C0B9</accession>
<organism>
    <name type="scientific">Acaryochloris marina (strain MBIC 11017)</name>
    <dbReference type="NCBI Taxonomy" id="329726"/>
    <lineage>
        <taxon>Bacteria</taxon>
        <taxon>Bacillati</taxon>
        <taxon>Cyanobacteriota</taxon>
        <taxon>Cyanophyceae</taxon>
        <taxon>Acaryochloridales</taxon>
        <taxon>Acaryochloridaceae</taxon>
        <taxon>Acaryochloris</taxon>
    </lineage>
</organism>